<organism>
    <name type="scientific">Salmonella schwarzengrund (strain CVM19633)</name>
    <dbReference type="NCBI Taxonomy" id="439843"/>
    <lineage>
        <taxon>Bacteria</taxon>
        <taxon>Pseudomonadati</taxon>
        <taxon>Pseudomonadota</taxon>
        <taxon>Gammaproteobacteria</taxon>
        <taxon>Enterobacterales</taxon>
        <taxon>Enterobacteriaceae</taxon>
        <taxon>Salmonella</taxon>
    </lineage>
</organism>
<gene>
    <name evidence="1" type="primary">ypfN</name>
    <name type="ordered locus">SeSA_A2717</name>
</gene>
<reference key="1">
    <citation type="journal article" date="2011" name="J. Bacteriol.">
        <title>Comparative genomics of 28 Salmonella enterica isolates: evidence for CRISPR-mediated adaptive sublineage evolution.</title>
        <authorList>
            <person name="Fricke W.F."/>
            <person name="Mammel M.K."/>
            <person name="McDermott P.F."/>
            <person name="Tartera C."/>
            <person name="White D.G."/>
            <person name="Leclerc J.E."/>
            <person name="Ravel J."/>
            <person name="Cebula T.A."/>
        </authorList>
    </citation>
    <scope>NUCLEOTIDE SEQUENCE [LARGE SCALE GENOMIC DNA]</scope>
    <source>
        <strain>CVM19633</strain>
    </source>
</reference>
<proteinExistence type="inferred from homology"/>
<name>YPFN_SALSV</name>
<evidence type="ECO:0000255" key="1">
    <source>
        <dbReference type="HAMAP-Rule" id="MF_01566"/>
    </source>
</evidence>
<evidence type="ECO:0000256" key="2">
    <source>
        <dbReference type="SAM" id="MobiDB-lite"/>
    </source>
</evidence>
<sequence length="66" mass="8114">MDWLAKYWWILVLVFLVGVLLNVIKDLKRIDHKKFLANKPELPPHRDFNDKWDDEEDWPKKDQPKK</sequence>
<dbReference type="EMBL" id="CP001127">
    <property type="protein sequence ID" value="ACF89370.1"/>
    <property type="molecule type" value="Genomic_DNA"/>
</dbReference>
<dbReference type="RefSeq" id="WP_000383842.1">
    <property type="nucleotide sequence ID" value="NC_011094.1"/>
</dbReference>
<dbReference type="SMR" id="B4TR56"/>
<dbReference type="KEGG" id="sew:SeSA_A2717"/>
<dbReference type="HOGENOM" id="CLU_198936_0_0_6"/>
<dbReference type="Proteomes" id="UP000001865">
    <property type="component" value="Chromosome"/>
</dbReference>
<dbReference type="GO" id="GO:0005886">
    <property type="term" value="C:plasma membrane"/>
    <property type="evidence" value="ECO:0007669"/>
    <property type="project" value="UniProtKB-SubCell"/>
</dbReference>
<dbReference type="HAMAP" id="MF_01566">
    <property type="entry name" value="UPF0370"/>
    <property type="match status" value="1"/>
</dbReference>
<dbReference type="InterPro" id="IPR020910">
    <property type="entry name" value="UPF0370"/>
</dbReference>
<dbReference type="NCBIfam" id="NF010185">
    <property type="entry name" value="PRK13664.1"/>
    <property type="match status" value="1"/>
</dbReference>
<dbReference type="Pfam" id="PF13980">
    <property type="entry name" value="UPF0370"/>
    <property type="match status" value="1"/>
</dbReference>
<protein>
    <recommendedName>
        <fullName evidence="1">UPF0370 protein YpfN</fullName>
    </recommendedName>
</protein>
<comment type="subcellular location">
    <subcellularLocation>
        <location evidence="1">Cell membrane</location>
        <topology evidence="1">Single-pass membrane protein</topology>
    </subcellularLocation>
</comment>
<comment type="similarity">
    <text evidence="1">Belongs to the UPF0370 family.</text>
</comment>
<accession>B4TR56</accession>
<keyword id="KW-1003">Cell membrane</keyword>
<keyword id="KW-0472">Membrane</keyword>
<keyword id="KW-0812">Transmembrane</keyword>
<keyword id="KW-1133">Transmembrane helix</keyword>
<feature type="chain" id="PRO_1000199734" description="UPF0370 protein YpfN">
    <location>
        <begin position="1"/>
        <end position="66"/>
    </location>
</feature>
<feature type="transmembrane region" description="Helical" evidence="1">
    <location>
        <begin position="4"/>
        <end position="24"/>
    </location>
</feature>
<feature type="region of interest" description="Disordered" evidence="2">
    <location>
        <begin position="39"/>
        <end position="66"/>
    </location>
</feature>
<feature type="compositionally biased region" description="Basic and acidic residues" evidence="2">
    <location>
        <begin position="42"/>
        <end position="51"/>
    </location>
</feature>